<name>GAG_FIVWO</name>
<reference key="1">
    <citation type="journal article" date="1993" name="Virology">
        <title>Structure and variations of feline immunodeficiency virus envelope glycoproteins.</title>
        <authorList>
            <person name="Pancino G."/>
            <person name="Fossati I."/>
            <person name="Chappey C."/>
            <person name="Castelot S."/>
            <person name="Hurtrel B."/>
            <person name="Maraillon A."/>
            <person name="Klatzmann D."/>
            <person name="Sonigo P."/>
        </authorList>
    </citation>
    <scope>NUCLEOTIDE SEQUENCE [GENOMIC DNA]</scope>
</reference>
<feature type="chain" id="PRO_0000038793" description="Matrix protein p15">
    <location>
        <begin position="1"/>
        <end position="135"/>
    </location>
</feature>
<feature type="chain" id="PRO_0000272318" description="Capsid protein p24">
    <location>
        <begin position="136"/>
        <end position="357"/>
    </location>
</feature>
<feature type="peptide" id="PRO_0000038794" description="p1" evidence="2">
    <location>
        <begin position="358"/>
        <end position="366"/>
    </location>
</feature>
<feature type="chain" id="PRO_0000038795" description="Nucleocapsid protein p13">
    <location>
        <begin position="367"/>
        <end position="450"/>
    </location>
</feature>
<feature type="zinc finger region" description="CCHC-type 1" evidence="3">
    <location>
        <begin position="375"/>
        <end position="392"/>
    </location>
</feature>
<feature type="zinc finger region" description="CCHC-type 2" evidence="3">
    <location>
        <begin position="394"/>
        <end position="411"/>
    </location>
</feature>
<feature type="region of interest" description="Disordered" evidence="4">
    <location>
        <begin position="116"/>
        <end position="136"/>
    </location>
</feature>
<feature type="short sequence motif" description="PTAP/PSAP motif">
    <location>
        <begin position="438"/>
        <end position="441"/>
    </location>
</feature>
<feature type="compositionally biased region" description="Basic and acidic residues" evidence="4">
    <location>
        <begin position="119"/>
        <end position="130"/>
    </location>
</feature>
<organism>
    <name type="scientific">Feline immunodeficiency virus (isolate Wo)</name>
    <name type="common">FIV</name>
    <dbReference type="NCBI Taxonomy" id="45409"/>
    <lineage>
        <taxon>Viruses</taxon>
        <taxon>Riboviria</taxon>
        <taxon>Pararnavirae</taxon>
        <taxon>Artverviricota</taxon>
        <taxon>Revtraviricetes</taxon>
        <taxon>Ortervirales</taxon>
        <taxon>Retroviridae</taxon>
        <taxon>Orthoretrovirinae</taxon>
        <taxon>Lentivirus</taxon>
        <taxon>Feline immunodeficiency virus</taxon>
    </lineage>
</organism>
<comment type="function">
    <text evidence="1">Matrix protein p15 forms the outer shell of the core of the virus, lining the inner surface of the viral membrane.</text>
</comment>
<comment type="function">
    <text evidence="1">Capsid protein p24 forms the conical core of the virus that encapsulates the genomic RNA-nucleocapsid complex.</text>
</comment>
<comment type="function">
    <text evidence="1">Nucleocapsid protein p13 encapsulates and protects viral dimeric unspliced (genomic) RNA. Binds these RNAs through its zinc fingers (By similarity).</text>
</comment>
<comment type="subcellular location">
    <molecule>Matrix protein p15</molecule>
    <subcellularLocation>
        <location evidence="5">Virion</location>
    </subcellularLocation>
</comment>
<comment type="subcellular location">
    <molecule>Capsid protein p24</molecule>
    <subcellularLocation>
        <location evidence="5">Virion</location>
    </subcellularLocation>
</comment>
<comment type="subcellular location">
    <molecule>Nucleocapsid protein p13</molecule>
    <subcellularLocation>
        <location evidence="5">Virion</location>
    </subcellularLocation>
</comment>
<comment type="domain">
    <text evidence="1">Late-budding domains (L domains) are short sequence motifs essential for viral particle budding. They recruit proteins of the host ESCRT machinery (Endosomal Sorting Complex Required for Transport) or ESCRT-associated proteins. Nucleocapsid protein p13 contains one L domain: a PTAP/PSAP motif, which interacts with the UEV domain of TSG101 (By similarity).</text>
</comment>
<comment type="similarity">
    <text evidence="5">Belongs to the feline lentivirus group gag polyprotein family.</text>
</comment>
<protein>
    <recommendedName>
        <fullName>Gag polyprotein</fullName>
    </recommendedName>
    <component>
        <recommendedName>
            <fullName>Matrix protein p15</fullName>
            <shortName>MA</shortName>
        </recommendedName>
    </component>
    <component>
        <recommendedName>
            <fullName>Capsid protein p24</fullName>
            <shortName>CA</shortName>
        </recommendedName>
    </component>
    <component>
        <recommendedName>
            <fullName>p1</fullName>
        </recommendedName>
    </component>
    <component>
        <recommendedName>
            <fullName>Nucleocapsid protein p13</fullName>
            <shortName>NC</shortName>
        </recommendedName>
    </component>
</protein>
<dbReference type="EMBL" id="L06136">
    <property type="protein sequence ID" value="AAA43069.1"/>
    <property type="molecule type" value="Genomic_DNA"/>
</dbReference>
<dbReference type="EMBL" id="L06311">
    <property type="protein sequence ID" value="AAA43070.1"/>
    <property type="molecule type" value="Genomic_DNA"/>
</dbReference>
<dbReference type="SMR" id="Q05313"/>
<dbReference type="GO" id="GO:0019013">
    <property type="term" value="C:viral nucleocapsid"/>
    <property type="evidence" value="ECO:0007669"/>
    <property type="project" value="UniProtKB-KW"/>
</dbReference>
<dbReference type="GO" id="GO:0003676">
    <property type="term" value="F:nucleic acid binding"/>
    <property type="evidence" value="ECO:0007669"/>
    <property type="project" value="InterPro"/>
</dbReference>
<dbReference type="GO" id="GO:0039660">
    <property type="term" value="F:structural constituent of virion"/>
    <property type="evidence" value="ECO:0007669"/>
    <property type="project" value="UniProtKB-KW"/>
</dbReference>
<dbReference type="GO" id="GO:0008270">
    <property type="term" value="F:zinc ion binding"/>
    <property type="evidence" value="ECO:0007669"/>
    <property type="project" value="UniProtKB-KW"/>
</dbReference>
<dbReference type="GO" id="GO:0039702">
    <property type="term" value="P:viral budding via host ESCRT complex"/>
    <property type="evidence" value="ECO:0007669"/>
    <property type="project" value="UniProtKB-KW"/>
</dbReference>
<dbReference type="Gene3D" id="1.10.1200.30">
    <property type="match status" value="1"/>
</dbReference>
<dbReference type="Gene3D" id="1.10.375.10">
    <property type="entry name" value="Human Immunodeficiency Virus Type 1 Capsid Protein"/>
    <property type="match status" value="1"/>
</dbReference>
<dbReference type="Gene3D" id="1.10.150.90">
    <property type="entry name" value="Immunodeficiency lentiviruses, gag gene matrix protein p17"/>
    <property type="match status" value="1"/>
</dbReference>
<dbReference type="Gene3D" id="4.10.60.10">
    <property type="entry name" value="Zinc finger, CCHC-type"/>
    <property type="match status" value="1"/>
</dbReference>
<dbReference type="InterPro" id="IPR045345">
    <property type="entry name" value="Gag_p24_C"/>
</dbReference>
<dbReference type="InterPro" id="IPR012344">
    <property type="entry name" value="Matrix_HIV/RSV_N"/>
</dbReference>
<dbReference type="InterPro" id="IPR050195">
    <property type="entry name" value="Primate_lentivir_Gag_pol-like"/>
</dbReference>
<dbReference type="InterPro" id="IPR008916">
    <property type="entry name" value="Retrov_capsid_C"/>
</dbReference>
<dbReference type="InterPro" id="IPR008919">
    <property type="entry name" value="Retrov_capsid_N"/>
</dbReference>
<dbReference type="InterPro" id="IPR001878">
    <property type="entry name" value="Znf_CCHC"/>
</dbReference>
<dbReference type="InterPro" id="IPR036875">
    <property type="entry name" value="Znf_CCHC_sf"/>
</dbReference>
<dbReference type="PANTHER" id="PTHR40389:SF4">
    <property type="match status" value="1"/>
</dbReference>
<dbReference type="PANTHER" id="PTHR40389">
    <property type="entry name" value="ENDOGENOUS RETROVIRUS GROUP K MEMBER 24 GAG POLYPROTEIN-RELATED"/>
    <property type="match status" value="1"/>
</dbReference>
<dbReference type="Pfam" id="PF19317">
    <property type="entry name" value="Gag_p24_C"/>
    <property type="match status" value="1"/>
</dbReference>
<dbReference type="Pfam" id="PF00098">
    <property type="entry name" value="zf-CCHC"/>
    <property type="match status" value="2"/>
</dbReference>
<dbReference type="SMART" id="SM00343">
    <property type="entry name" value="ZnF_C2HC"/>
    <property type="match status" value="2"/>
</dbReference>
<dbReference type="SUPFAM" id="SSF47353">
    <property type="entry name" value="Retrovirus capsid dimerization domain-like"/>
    <property type="match status" value="1"/>
</dbReference>
<dbReference type="SUPFAM" id="SSF47943">
    <property type="entry name" value="Retrovirus capsid protein, N-terminal core domain"/>
    <property type="match status" value="1"/>
</dbReference>
<dbReference type="SUPFAM" id="SSF57756">
    <property type="entry name" value="Retrovirus zinc finger-like domains"/>
    <property type="match status" value="1"/>
</dbReference>
<dbReference type="PROSITE" id="PS50158">
    <property type="entry name" value="ZF_CCHC"/>
    <property type="match status" value="2"/>
</dbReference>
<keyword id="KW-0167">Capsid protein</keyword>
<keyword id="KW-0945">Host-virus interaction</keyword>
<keyword id="KW-0479">Metal-binding</keyword>
<keyword id="KW-0677">Repeat</keyword>
<keyword id="KW-1198">Viral budding</keyword>
<keyword id="KW-1187">Viral budding via the host ESCRT complexes</keyword>
<keyword id="KW-0468">Viral matrix protein</keyword>
<keyword id="KW-0543">Viral nucleoprotein</keyword>
<keyword id="KW-1188">Viral release from host cell</keyword>
<keyword id="KW-0946">Virion</keyword>
<keyword id="KW-0917">Virion maturation</keyword>
<keyword id="KW-0862">Zinc</keyword>
<keyword id="KW-0863">Zinc-finger</keyword>
<sequence>MGNGQGRDWKMAIKRCSNGAVGVGGKSKKFGEGNFRWAIRMANVSTGREPGDIPETLDQLRLVICDLQERREKFGSSKEIDMAIAALKVFAVVGLLNMTVSTAAAAENMYTQMGLDTRPSTKEAGGKEEGPPQAYPIQTVNGTTQYVALDPKMVSIFMEKAREGLGGEEVQLWFTAFSANLTPTDMATLIMARPGCAADKEILDESLKQLTAEYDRTHPPDGPRPLPYFTAAEIMGIGLTQEQQAEARFAPARMQCRAWYLEALGKLAAIKAKSPRAVQLRQGAKEDYSSFIDRLFAQIDQEQNTAEVKLYLKQSLSIANANADCKKAMSHLKPESTLEEKLRACQEIGFPGYKMQLLAEALTKVQVVQSKGPGPVCFNCKRPGHLARQCRDVKKCNKCGKPGHLAAKCWQGGKKNSGNWKAGRAAAPVNQVQQAVMPSAPPMEEKLLDL</sequence>
<accession>Q05313</accession>
<gene>
    <name type="primary">gag</name>
</gene>
<organismHost>
    <name type="scientific">Felidae</name>
    <name type="common">cat family</name>
    <dbReference type="NCBI Taxonomy" id="9681"/>
</organismHost>
<evidence type="ECO:0000250" key="1"/>
<evidence type="ECO:0000255" key="2"/>
<evidence type="ECO:0000255" key="3">
    <source>
        <dbReference type="PROSITE-ProRule" id="PRU00047"/>
    </source>
</evidence>
<evidence type="ECO:0000256" key="4">
    <source>
        <dbReference type="SAM" id="MobiDB-lite"/>
    </source>
</evidence>
<evidence type="ECO:0000305" key="5"/>
<proteinExistence type="inferred from homology"/>